<name>DNAA_GEOSM</name>
<dbReference type="EMBL" id="CP001661">
    <property type="protein sequence ID" value="ACT16088.1"/>
    <property type="molecule type" value="Genomic_DNA"/>
</dbReference>
<dbReference type="SMR" id="C6E7Q5"/>
<dbReference type="STRING" id="443144.GM21_0001"/>
<dbReference type="KEGG" id="gem:GM21_0001"/>
<dbReference type="eggNOG" id="COG0593">
    <property type="taxonomic scope" value="Bacteria"/>
</dbReference>
<dbReference type="HOGENOM" id="CLU_026910_3_1_7"/>
<dbReference type="OrthoDB" id="9807019at2"/>
<dbReference type="GO" id="GO:0005737">
    <property type="term" value="C:cytoplasm"/>
    <property type="evidence" value="ECO:0007669"/>
    <property type="project" value="UniProtKB-SubCell"/>
</dbReference>
<dbReference type="GO" id="GO:0005886">
    <property type="term" value="C:plasma membrane"/>
    <property type="evidence" value="ECO:0007669"/>
    <property type="project" value="TreeGrafter"/>
</dbReference>
<dbReference type="GO" id="GO:0005524">
    <property type="term" value="F:ATP binding"/>
    <property type="evidence" value="ECO:0007669"/>
    <property type="project" value="UniProtKB-UniRule"/>
</dbReference>
<dbReference type="GO" id="GO:0016887">
    <property type="term" value="F:ATP hydrolysis activity"/>
    <property type="evidence" value="ECO:0007669"/>
    <property type="project" value="InterPro"/>
</dbReference>
<dbReference type="GO" id="GO:0003688">
    <property type="term" value="F:DNA replication origin binding"/>
    <property type="evidence" value="ECO:0007669"/>
    <property type="project" value="UniProtKB-UniRule"/>
</dbReference>
<dbReference type="GO" id="GO:0008289">
    <property type="term" value="F:lipid binding"/>
    <property type="evidence" value="ECO:0007669"/>
    <property type="project" value="UniProtKB-KW"/>
</dbReference>
<dbReference type="GO" id="GO:0006270">
    <property type="term" value="P:DNA replication initiation"/>
    <property type="evidence" value="ECO:0007669"/>
    <property type="project" value="UniProtKB-UniRule"/>
</dbReference>
<dbReference type="GO" id="GO:0006275">
    <property type="term" value="P:regulation of DNA replication"/>
    <property type="evidence" value="ECO:0007669"/>
    <property type="project" value="UniProtKB-UniRule"/>
</dbReference>
<dbReference type="CDD" id="cd00009">
    <property type="entry name" value="AAA"/>
    <property type="match status" value="1"/>
</dbReference>
<dbReference type="CDD" id="cd06571">
    <property type="entry name" value="Bac_DnaA_C"/>
    <property type="match status" value="1"/>
</dbReference>
<dbReference type="FunFam" id="1.10.8.60:FF:000003">
    <property type="entry name" value="Chromosomal replication initiator protein DnaA"/>
    <property type="match status" value="1"/>
</dbReference>
<dbReference type="FunFam" id="3.40.50.300:FF:000150">
    <property type="entry name" value="Chromosomal replication initiator protein DnaA"/>
    <property type="match status" value="1"/>
</dbReference>
<dbReference type="Gene3D" id="1.10.1750.10">
    <property type="match status" value="1"/>
</dbReference>
<dbReference type="Gene3D" id="1.10.8.60">
    <property type="match status" value="1"/>
</dbReference>
<dbReference type="Gene3D" id="3.30.300.180">
    <property type="match status" value="1"/>
</dbReference>
<dbReference type="Gene3D" id="3.40.50.300">
    <property type="entry name" value="P-loop containing nucleotide triphosphate hydrolases"/>
    <property type="match status" value="1"/>
</dbReference>
<dbReference type="HAMAP" id="MF_00377">
    <property type="entry name" value="DnaA_bact"/>
    <property type="match status" value="1"/>
</dbReference>
<dbReference type="InterPro" id="IPR003593">
    <property type="entry name" value="AAA+_ATPase"/>
</dbReference>
<dbReference type="InterPro" id="IPR001957">
    <property type="entry name" value="Chromosome_initiator_DnaA"/>
</dbReference>
<dbReference type="InterPro" id="IPR020591">
    <property type="entry name" value="Chromosome_initiator_DnaA-like"/>
</dbReference>
<dbReference type="InterPro" id="IPR018312">
    <property type="entry name" value="Chromosome_initiator_DnaA_CS"/>
</dbReference>
<dbReference type="InterPro" id="IPR013159">
    <property type="entry name" value="DnaA_C"/>
</dbReference>
<dbReference type="InterPro" id="IPR013317">
    <property type="entry name" value="DnaA_dom"/>
</dbReference>
<dbReference type="InterPro" id="IPR024633">
    <property type="entry name" value="DnaA_N_dom"/>
</dbReference>
<dbReference type="InterPro" id="IPR038454">
    <property type="entry name" value="DnaA_N_sf"/>
</dbReference>
<dbReference type="InterPro" id="IPR027417">
    <property type="entry name" value="P-loop_NTPase"/>
</dbReference>
<dbReference type="InterPro" id="IPR010921">
    <property type="entry name" value="Trp_repressor/repl_initiator"/>
</dbReference>
<dbReference type="NCBIfam" id="TIGR00362">
    <property type="entry name" value="DnaA"/>
    <property type="match status" value="1"/>
</dbReference>
<dbReference type="PANTHER" id="PTHR30050">
    <property type="entry name" value="CHROMOSOMAL REPLICATION INITIATOR PROTEIN DNAA"/>
    <property type="match status" value="1"/>
</dbReference>
<dbReference type="PANTHER" id="PTHR30050:SF2">
    <property type="entry name" value="CHROMOSOMAL REPLICATION INITIATOR PROTEIN DNAA"/>
    <property type="match status" value="1"/>
</dbReference>
<dbReference type="Pfam" id="PF00308">
    <property type="entry name" value="Bac_DnaA"/>
    <property type="match status" value="1"/>
</dbReference>
<dbReference type="Pfam" id="PF08299">
    <property type="entry name" value="Bac_DnaA_C"/>
    <property type="match status" value="1"/>
</dbReference>
<dbReference type="Pfam" id="PF11638">
    <property type="entry name" value="DnaA_N"/>
    <property type="match status" value="1"/>
</dbReference>
<dbReference type="PRINTS" id="PR00051">
    <property type="entry name" value="DNAA"/>
</dbReference>
<dbReference type="SMART" id="SM00382">
    <property type="entry name" value="AAA"/>
    <property type="match status" value="1"/>
</dbReference>
<dbReference type="SMART" id="SM00760">
    <property type="entry name" value="Bac_DnaA_C"/>
    <property type="match status" value="1"/>
</dbReference>
<dbReference type="SUPFAM" id="SSF52540">
    <property type="entry name" value="P-loop containing nucleoside triphosphate hydrolases"/>
    <property type="match status" value="1"/>
</dbReference>
<dbReference type="SUPFAM" id="SSF48295">
    <property type="entry name" value="TrpR-like"/>
    <property type="match status" value="1"/>
</dbReference>
<dbReference type="PROSITE" id="PS01008">
    <property type="entry name" value="DNAA"/>
    <property type="match status" value="1"/>
</dbReference>
<protein>
    <recommendedName>
        <fullName evidence="1">Chromosomal replication initiator protein DnaA</fullName>
    </recommendedName>
</protein>
<sequence length="460" mass="52617">MENIWLEAQTNLKQVLTEQTYSTWIDPLKFLGATVDTIVLEVPSSFFQKWVTDKYLAMIKEAISAVNGKSYQIEFHVADEKPEAAPEEKPEKEGKPAREKEKDKDKEKEKDREKEKDKKELVPNLNPKYTFESFVSGPSNQFAYAASQAVANKPATNYNPLFIYGGVGLGKTHLVNAIGNHILAKNPKAKICYYSSEKFMNEMINSLRYKKMDEFRNKFRKMDLLLIDDIQFMAGKEATQEEFFHTFNALYESHKQIVVTSDKFPKDIPGLEERLRSRFEWGLIADIQPPGVETKVAILKKKSDMHAVNLPDDVALFLAEGANSNIRELEGMLIRLEAFASLTGQEITLSMAREVMKDIIVEKTRDITVEMIQKTVAEHFRIKVSELKSDKRIKTLVVPRQIAIYICRELTKASYPEIGEKFGGKDHSTIIHSVKKIEKQMAGDDEFKASVEDIRKKLFT</sequence>
<feature type="chain" id="PRO_1000205653" description="Chromosomal replication initiator protein DnaA">
    <location>
        <begin position="1"/>
        <end position="460"/>
    </location>
</feature>
<feature type="region of interest" description="Domain I, interacts with DnaA modulators" evidence="1">
    <location>
        <begin position="1"/>
        <end position="83"/>
    </location>
</feature>
<feature type="region of interest" description="Disordered" evidence="2">
    <location>
        <begin position="78"/>
        <end position="122"/>
    </location>
</feature>
<feature type="region of interest" description="Domain II" evidence="1">
    <location>
        <begin position="83"/>
        <end position="123"/>
    </location>
</feature>
<feature type="region of interest" description="Domain III, AAA+ region" evidence="1">
    <location>
        <begin position="124"/>
        <end position="340"/>
    </location>
</feature>
<feature type="region of interest" description="Domain IV, binds dsDNA" evidence="1">
    <location>
        <begin position="341"/>
        <end position="460"/>
    </location>
</feature>
<feature type="compositionally biased region" description="Basic and acidic residues" evidence="2">
    <location>
        <begin position="78"/>
        <end position="121"/>
    </location>
</feature>
<feature type="binding site" evidence="1">
    <location>
        <position position="168"/>
    </location>
    <ligand>
        <name>ATP</name>
        <dbReference type="ChEBI" id="CHEBI:30616"/>
    </ligand>
</feature>
<feature type="binding site" evidence="1">
    <location>
        <position position="170"/>
    </location>
    <ligand>
        <name>ATP</name>
        <dbReference type="ChEBI" id="CHEBI:30616"/>
    </ligand>
</feature>
<feature type="binding site" evidence="1">
    <location>
        <position position="171"/>
    </location>
    <ligand>
        <name>ATP</name>
        <dbReference type="ChEBI" id="CHEBI:30616"/>
    </ligand>
</feature>
<feature type="binding site" evidence="1">
    <location>
        <position position="172"/>
    </location>
    <ligand>
        <name>ATP</name>
        <dbReference type="ChEBI" id="CHEBI:30616"/>
    </ligand>
</feature>
<keyword id="KW-0067">ATP-binding</keyword>
<keyword id="KW-0963">Cytoplasm</keyword>
<keyword id="KW-0235">DNA replication</keyword>
<keyword id="KW-0238">DNA-binding</keyword>
<keyword id="KW-0446">Lipid-binding</keyword>
<keyword id="KW-0547">Nucleotide-binding</keyword>
<accession>C6E7Q5</accession>
<organism>
    <name type="scientific">Geobacter sp. (strain M21)</name>
    <dbReference type="NCBI Taxonomy" id="443144"/>
    <lineage>
        <taxon>Bacteria</taxon>
        <taxon>Pseudomonadati</taxon>
        <taxon>Thermodesulfobacteriota</taxon>
        <taxon>Desulfuromonadia</taxon>
        <taxon>Geobacterales</taxon>
        <taxon>Geobacteraceae</taxon>
        <taxon>Geobacter</taxon>
    </lineage>
</organism>
<reference key="1">
    <citation type="submission" date="2009-07" db="EMBL/GenBank/DDBJ databases">
        <title>Complete sequence of Geobacter sp. M21.</title>
        <authorList>
            <consortium name="US DOE Joint Genome Institute"/>
            <person name="Lucas S."/>
            <person name="Copeland A."/>
            <person name="Lapidus A."/>
            <person name="Glavina del Rio T."/>
            <person name="Dalin E."/>
            <person name="Tice H."/>
            <person name="Bruce D."/>
            <person name="Goodwin L."/>
            <person name="Pitluck S."/>
            <person name="Saunders E."/>
            <person name="Brettin T."/>
            <person name="Detter J.C."/>
            <person name="Han C."/>
            <person name="Larimer F."/>
            <person name="Land M."/>
            <person name="Hauser L."/>
            <person name="Kyrpides N."/>
            <person name="Ovchinnikova G."/>
            <person name="Lovley D."/>
        </authorList>
    </citation>
    <scope>NUCLEOTIDE SEQUENCE [LARGE SCALE GENOMIC DNA]</scope>
    <source>
        <strain>M21</strain>
    </source>
</reference>
<proteinExistence type="inferred from homology"/>
<comment type="function">
    <text evidence="1">Plays an essential role in the initiation and regulation of chromosomal replication. ATP-DnaA binds to the origin of replication (oriC) to initiate formation of the DNA replication initiation complex once per cell cycle. Binds the DnaA box (a 9 base pair repeat at the origin) and separates the double-stranded (ds)DNA. Forms a right-handed helical filament on oriC DNA; dsDNA binds to the exterior of the filament while single-stranded (ss)DNA is stabiized in the filament's interior. The ATP-DnaA-oriC complex binds and stabilizes one strand of the AT-rich DNA unwinding element (DUE), permitting loading of DNA polymerase. After initiation quickly degrades to an ADP-DnaA complex that is not apt for DNA replication. Binds acidic phospholipids.</text>
</comment>
<comment type="subunit">
    <text evidence="1">Oligomerizes as a right-handed, spiral filament on DNA at oriC.</text>
</comment>
<comment type="subcellular location">
    <subcellularLocation>
        <location evidence="1">Cytoplasm</location>
    </subcellularLocation>
</comment>
<comment type="domain">
    <text evidence="1">Domain I is involved in oligomerization and binding regulators, domain II is flexibile and of varying length in different bacteria, domain III forms the AAA+ region, while domain IV binds dsDNA.</text>
</comment>
<comment type="similarity">
    <text evidence="1">Belongs to the DnaA family.</text>
</comment>
<evidence type="ECO:0000255" key="1">
    <source>
        <dbReference type="HAMAP-Rule" id="MF_00377"/>
    </source>
</evidence>
<evidence type="ECO:0000256" key="2">
    <source>
        <dbReference type="SAM" id="MobiDB-lite"/>
    </source>
</evidence>
<gene>
    <name evidence="1" type="primary">dnaA</name>
    <name type="ordered locus">GM21_0001</name>
</gene>